<gene>
    <name evidence="5" type="primary">apbC</name>
    <name evidence="7" type="synonym">mrp</name>
    <name evidence="7" type="ordered locus">STM2154</name>
</gene>
<reference key="1">
    <citation type="journal article" date="2001" name="Nature">
        <title>Complete genome sequence of Salmonella enterica serovar Typhimurium LT2.</title>
        <authorList>
            <person name="McClelland M."/>
            <person name="Sanderson K.E."/>
            <person name="Spieth J."/>
            <person name="Clifton S.W."/>
            <person name="Latreille P."/>
            <person name="Courtney L."/>
            <person name="Porwollik S."/>
            <person name="Ali J."/>
            <person name="Dante M."/>
            <person name="Du F."/>
            <person name="Hou S."/>
            <person name="Layman D."/>
            <person name="Leonard S."/>
            <person name="Nguyen C."/>
            <person name="Scott K."/>
            <person name="Holmes A."/>
            <person name="Grewal N."/>
            <person name="Mulvaney E."/>
            <person name="Ryan E."/>
            <person name="Sun H."/>
            <person name="Florea L."/>
            <person name="Miller W."/>
            <person name="Stoneking T."/>
            <person name="Nhan M."/>
            <person name="Waterston R."/>
            <person name="Wilson R.K."/>
        </authorList>
    </citation>
    <scope>NUCLEOTIDE SEQUENCE [LARGE SCALE GENOMIC DNA]</scope>
    <source>
        <strain>LT2 / SGSC1412 / ATCC 700720</strain>
    </source>
</reference>
<reference key="2">
    <citation type="journal article" date="2003" name="J. Bacteriol.">
        <title>Lack of the ApbC or ApbE protein results in a defect in Fe-S cluster metabolism in Salmonella enterica serovar Typhimurium.</title>
        <authorList>
            <person name="Skovran E."/>
            <person name="Downs D.M."/>
        </authorList>
    </citation>
    <scope>FUNCTION AS AN ATPASE</scope>
    <scope>DISRUPTION PHENOTYPE</scope>
    <source>
        <strain>LT2</strain>
    </source>
</reference>
<reference key="3">
    <citation type="journal article" date="2008" name="Biochemistry">
        <title>Bacterial ApbC can bind and effectively transfer iron-sulfur clusters.</title>
        <authorList>
            <person name="Boyd J.M."/>
            <person name="Pierik A.J."/>
            <person name="Netz D.J."/>
            <person name="Lill R."/>
            <person name="Downs D.M."/>
        </authorList>
    </citation>
    <scope>FUNCTION</scope>
    <scope>SUBUNIT</scope>
</reference>
<reference key="4">
    <citation type="journal article" date="2009" name="J. Biol. Chem.">
        <title>Bacterial ApbC protein has two biochemical activities that are required for in vivo function.</title>
        <authorList>
            <person name="Boyd J.M."/>
            <person name="Sondelski J.L."/>
            <person name="Downs D.M."/>
        </authorList>
    </citation>
    <scope>FUNCTION</scope>
    <scope>MUTAGENESIS OF LYS-116; LYS-121; SER-122; SER-182; CYS-283 AND CYS-286</scope>
    <source>
        <strain>LT2</strain>
    </source>
</reference>
<feature type="chain" id="PRO_0000433952" description="Iron-sulfur cluster carrier protein">
    <location>
        <begin position="1"/>
        <end position="369"/>
    </location>
</feature>
<feature type="binding site" evidence="1">
    <location>
        <begin position="115"/>
        <end position="122"/>
    </location>
    <ligand>
        <name>ATP</name>
        <dbReference type="ChEBI" id="CHEBI:30616"/>
    </ligand>
</feature>
<feature type="mutagenesis site" description="Hydrolyzes ATP and can bind an Fe-S cluster, but cluster transfer is compromised." evidence="4">
    <original>K</original>
    <variation>A</variation>
    <location>
        <position position="116"/>
    </location>
</feature>
<feature type="mutagenesis site" description="Hydrolyzes ATP and can bind an Fe-S cluster, but cluster transfer is compromised." evidence="4">
    <original>K</original>
    <variation>A</variation>
    <location>
        <position position="121"/>
    </location>
</feature>
<feature type="mutagenesis site" description="Can bind and transfer an Fe-S cluster, but has no detectable ATPase activity." evidence="4">
    <original>S</original>
    <variation>A</variation>
    <location>
        <position position="122"/>
    </location>
</feature>
<feature type="mutagenesis site" description="Can bind and transfer an Fe-S cluster, but has no detectable ATPase activity." evidence="4">
    <original>S</original>
    <variation>A</variation>
    <location>
        <position position="182"/>
    </location>
</feature>
<feature type="mutagenesis site" description="Can hydrolyze ATP and transfer an Fe-S cluster." evidence="4">
    <original>C</original>
    <variation>A</variation>
    <location>
        <position position="283"/>
    </location>
</feature>
<feature type="mutagenesis site" description="Can hydrolyze ATP and transfer an Fe-S cluster." evidence="4">
    <original>C</original>
    <variation>A</variation>
    <location>
        <position position="286"/>
    </location>
</feature>
<dbReference type="EMBL" id="AE006468">
    <property type="protein sequence ID" value="AAL21057.1"/>
    <property type="molecule type" value="Genomic_DNA"/>
</dbReference>
<dbReference type="RefSeq" id="NP_461098.1">
    <property type="nucleotide sequence ID" value="NC_003197.2"/>
</dbReference>
<dbReference type="RefSeq" id="WP_001005424.1">
    <property type="nucleotide sequence ID" value="NC_003197.2"/>
</dbReference>
<dbReference type="SMR" id="Q8ZNN5"/>
<dbReference type="STRING" id="99287.STM2154"/>
<dbReference type="PaxDb" id="99287-STM2154"/>
<dbReference type="DNASU" id="1253675"/>
<dbReference type="GeneID" id="1253675"/>
<dbReference type="KEGG" id="stm:STM2154"/>
<dbReference type="PATRIC" id="fig|99287.12.peg.2279"/>
<dbReference type="HOGENOM" id="CLU_024839_0_0_6"/>
<dbReference type="OMA" id="VSGCPMR"/>
<dbReference type="PhylomeDB" id="Q8ZNN5"/>
<dbReference type="BioCyc" id="SENT99287:STM2154-MONOMER"/>
<dbReference type="Proteomes" id="UP000001014">
    <property type="component" value="Chromosome"/>
</dbReference>
<dbReference type="GO" id="GO:0005829">
    <property type="term" value="C:cytosol"/>
    <property type="evidence" value="ECO:0000318"/>
    <property type="project" value="GO_Central"/>
</dbReference>
<dbReference type="GO" id="GO:0051539">
    <property type="term" value="F:4 iron, 4 sulfur cluster binding"/>
    <property type="evidence" value="ECO:0000318"/>
    <property type="project" value="GO_Central"/>
</dbReference>
<dbReference type="GO" id="GO:0005524">
    <property type="term" value="F:ATP binding"/>
    <property type="evidence" value="ECO:0007669"/>
    <property type="project" value="UniProtKB-UniRule"/>
</dbReference>
<dbReference type="GO" id="GO:0016887">
    <property type="term" value="F:ATP hydrolysis activity"/>
    <property type="evidence" value="ECO:0007669"/>
    <property type="project" value="UniProtKB-UniRule"/>
</dbReference>
<dbReference type="GO" id="GO:0140663">
    <property type="term" value="F:ATP-dependent FeS chaperone activity"/>
    <property type="evidence" value="ECO:0007669"/>
    <property type="project" value="InterPro"/>
</dbReference>
<dbReference type="GO" id="GO:0046872">
    <property type="term" value="F:metal ion binding"/>
    <property type="evidence" value="ECO:0007669"/>
    <property type="project" value="UniProtKB-KW"/>
</dbReference>
<dbReference type="GO" id="GO:0016226">
    <property type="term" value="P:iron-sulfur cluster assembly"/>
    <property type="evidence" value="ECO:0000318"/>
    <property type="project" value="GO_Central"/>
</dbReference>
<dbReference type="CDD" id="cd02037">
    <property type="entry name" value="Mrp_NBP35"/>
    <property type="match status" value="1"/>
</dbReference>
<dbReference type="FunFam" id="3.40.50.300:FF:000418">
    <property type="entry name" value="Iron-sulfur cluster carrier protein"/>
    <property type="match status" value="1"/>
</dbReference>
<dbReference type="Gene3D" id="3.40.50.300">
    <property type="entry name" value="P-loop containing nucleotide triphosphate hydrolases"/>
    <property type="match status" value="1"/>
</dbReference>
<dbReference type="HAMAP" id="MF_02040">
    <property type="entry name" value="Mrp_NBP35"/>
    <property type="match status" value="1"/>
</dbReference>
<dbReference type="InterPro" id="IPR034904">
    <property type="entry name" value="FSCA_dom_sf"/>
</dbReference>
<dbReference type="InterPro" id="IPR000808">
    <property type="entry name" value="Mrp-like_CS"/>
</dbReference>
<dbReference type="InterPro" id="IPR019591">
    <property type="entry name" value="Mrp/NBP35_ATP-bd"/>
</dbReference>
<dbReference type="InterPro" id="IPR044304">
    <property type="entry name" value="NUBPL-like"/>
</dbReference>
<dbReference type="InterPro" id="IPR027417">
    <property type="entry name" value="P-loop_NTPase"/>
</dbReference>
<dbReference type="InterPro" id="IPR033756">
    <property type="entry name" value="YlxH/NBP35"/>
</dbReference>
<dbReference type="NCBIfam" id="NF008669">
    <property type="entry name" value="PRK11670.1"/>
    <property type="match status" value="1"/>
</dbReference>
<dbReference type="PANTHER" id="PTHR42961">
    <property type="entry name" value="IRON-SULFUR PROTEIN NUBPL"/>
    <property type="match status" value="1"/>
</dbReference>
<dbReference type="PANTHER" id="PTHR42961:SF2">
    <property type="entry name" value="IRON-SULFUR PROTEIN NUBPL"/>
    <property type="match status" value="1"/>
</dbReference>
<dbReference type="Pfam" id="PF10609">
    <property type="entry name" value="ParA"/>
    <property type="match status" value="1"/>
</dbReference>
<dbReference type="SUPFAM" id="SSF117916">
    <property type="entry name" value="Fe-S cluster assembly (FSCA) domain-like"/>
    <property type="match status" value="1"/>
</dbReference>
<dbReference type="SUPFAM" id="SSF52540">
    <property type="entry name" value="P-loop containing nucleoside triphosphate hydrolases"/>
    <property type="match status" value="1"/>
</dbReference>
<dbReference type="PROSITE" id="PS01215">
    <property type="entry name" value="MRP"/>
    <property type="match status" value="1"/>
</dbReference>
<name>APBC_SALTY</name>
<sequence length="369" mass="39930">MNEQSQAKSPDTLRAMVAGTLANFQHPTLKHNLTTLKALHHVAWMDDTLHVELVMPFVWNSAFEVLKEQCSADLLRITGAKAIDWKLSYNIATLKRVKNQPGINGVKNIIAVSSGKGGVGKSSTAVNLALALAAEGAKVGVLDADIYGPSIPTMLGAEDQRPTSPDGTHMAPIMSHGLATNSIGYLVTDDNAMVWRGPMASKALMQMLQETLWPDLDYLVLDMPPGTGDIQLTLAQNIPVTGAVVVTTPQDIALIDAKKGIVMFEKVEVPVLGIVENMSMHICSNCGHHEPIFGTGGAQKLAEKYHTQLLGQMPLHISLREDLDRGTPTVVSRPESEFTAIYRELADRVAAQLYWQGEVIPGEIAFRAV</sequence>
<organism>
    <name type="scientific">Salmonella typhimurium (strain LT2 / SGSC1412 / ATCC 700720)</name>
    <dbReference type="NCBI Taxonomy" id="99287"/>
    <lineage>
        <taxon>Bacteria</taxon>
        <taxon>Pseudomonadati</taxon>
        <taxon>Pseudomonadota</taxon>
        <taxon>Gammaproteobacteria</taxon>
        <taxon>Enterobacterales</taxon>
        <taxon>Enterobacteriaceae</taxon>
        <taxon>Salmonella</taxon>
    </lineage>
</organism>
<proteinExistence type="evidence at protein level"/>
<protein>
    <recommendedName>
        <fullName evidence="1 6">Iron-sulfur cluster carrier protein</fullName>
    </recommendedName>
</protein>
<accession>Q8ZNN5</accession>
<evidence type="ECO:0000255" key="1">
    <source>
        <dbReference type="HAMAP-Rule" id="MF_02040"/>
    </source>
</evidence>
<evidence type="ECO:0000269" key="2">
    <source>
    </source>
</evidence>
<evidence type="ECO:0000269" key="3">
    <source>
    </source>
</evidence>
<evidence type="ECO:0000269" key="4">
    <source>
    </source>
</evidence>
<evidence type="ECO:0000303" key="5">
    <source>
    </source>
</evidence>
<evidence type="ECO:0000305" key="6"/>
<evidence type="ECO:0000312" key="7">
    <source>
        <dbReference type="EMBL" id="AAL21057.1"/>
    </source>
</evidence>
<comment type="function">
    <text evidence="2 3 4">Binds and transfers iron-sulfur (Fe-S) clusters to target apoproteins (PubMed:18616280, PubMed:19001370). Can hydrolyze ATP (PubMed:12486045, PubMed:19001370). Both activities are required for function in vivo, but the ability to hydrolyze ATP is not necessary for Fe-S cluster transfer (PubMed:19001370).</text>
</comment>
<comment type="subunit">
    <text evidence="3">Homodimer. Holo-ApbC forms a mixture of homodimers and homotetramers.</text>
</comment>
<comment type="disruption phenotype">
    <text evidence="2">Mutants are impaired in Fe-S cluster metabolism. They are conditional thiamine auxotrophs and have lower aconitase and succinate dehydrogenase activities.</text>
</comment>
<comment type="similarity">
    <text evidence="1 6">Belongs to the Mrp/NBP35 ATP-binding proteins family.</text>
</comment>
<keyword id="KW-0067">ATP-binding</keyword>
<keyword id="KW-0378">Hydrolase</keyword>
<keyword id="KW-0408">Iron</keyword>
<keyword id="KW-0411">Iron-sulfur</keyword>
<keyword id="KW-0479">Metal-binding</keyword>
<keyword id="KW-0547">Nucleotide-binding</keyword>
<keyword id="KW-1185">Reference proteome</keyword>